<accession>P0A0W9</accession>
<accession>Q9ETV2</accession>
<feature type="chain" id="PRO_0000157559" description="Large ribosomal subunit protein bL12">
    <location>
        <begin position="1"/>
        <end position="122"/>
    </location>
</feature>
<organism>
    <name type="scientific">Neisseria sicca</name>
    <dbReference type="NCBI Taxonomy" id="490"/>
    <lineage>
        <taxon>Bacteria</taxon>
        <taxon>Pseudomonadati</taxon>
        <taxon>Pseudomonadota</taxon>
        <taxon>Betaproteobacteria</taxon>
        <taxon>Neisseriales</taxon>
        <taxon>Neisseriaceae</taxon>
        <taxon>Neisseria</taxon>
    </lineage>
</organism>
<gene>
    <name evidence="1" type="primary">rplL</name>
</gene>
<evidence type="ECO:0000255" key="1">
    <source>
        <dbReference type="HAMAP-Rule" id="MF_00368"/>
    </source>
</evidence>
<evidence type="ECO:0000305" key="2"/>
<protein>
    <recommendedName>
        <fullName evidence="1">Large ribosomal subunit protein bL12</fullName>
    </recommendedName>
    <alternativeName>
        <fullName evidence="2">50S ribosomal protein L7/L12</fullName>
    </alternativeName>
</protein>
<name>RL7_NEISI</name>
<proteinExistence type="inferred from homology"/>
<reference key="1">
    <citation type="submission" date="2000-10" db="EMBL/GenBank/DDBJ databases">
        <title>Alterations in protein profiles associated with induction of the contact-induced enhanced invasion phenotype of Neisseria gonorrhoeae.</title>
        <authorList>
            <person name="Spence J.M."/>
            <person name="Clark V.L."/>
        </authorList>
    </citation>
    <scope>NUCLEOTIDE SEQUENCE [GENOMIC DNA]</scope>
    <source>
        <strain>ATCC 29256 / DSM 17713 / CCUG 23929 / CIP 103345 / LMG 5290 / NRL 30016</strain>
    </source>
</reference>
<comment type="function">
    <text evidence="1">Forms part of the ribosomal stalk which helps the ribosome interact with GTP-bound translation factors. Is thus essential for accurate translation.</text>
</comment>
<comment type="subunit">
    <text evidence="1">Homodimer. Part of the ribosomal stalk of the 50S ribosomal subunit. Forms a multimeric L10(L12)X complex, where L10 forms an elongated spine to which 2 to 4 L12 dimers bind in a sequential fashion. Binds GTP-bound translation factors.</text>
</comment>
<comment type="similarity">
    <text evidence="1">Belongs to the bacterial ribosomal protein bL12 family.</text>
</comment>
<keyword id="KW-0687">Ribonucleoprotein</keyword>
<keyword id="KW-0689">Ribosomal protein</keyword>
<dbReference type="EMBL" id="AF312974">
    <property type="protein sequence ID" value="AAG34166.1"/>
    <property type="molecule type" value="Genomic_DNA"/>
</dbReference>
<dbReference type="SMR" id="P0A0W9"/>
<dbReference type="GO" id="GO:0022625">
    <property type="term" value="C:cytosolic large ribosomal subunit"/>
    <property type="evidence" value="ECO:0007669"/>
    <property type="project" value="TreeGrafter"/>
</dbReference>
<dbReference type="GO" id="GO:0003729">
    <property type="term" value="F:mRNA binding"/>
    <property type="evidence" value="ECO:0007669"/>
    <property type="project" value="TreeGrafter"/>
</dbReference>
<dbReference type="GO" id="GO:0003735">
    <property type="term" value="F:structural constituent of ribosome"/>
    <property type="evidence" value="ECO:0007669"/>
    <property type="project" value="InterPro"/>
</dbReference>
<dbReference type="GO" id="GO:0006412">
    <property type="term" value="P:translation"/>
    <property type="evidence" value="ECO:0007669"/>
    <property type="project" value="UniProtKB-UniRule"/>
</dbReference>
<dbReference type="CDD" id="cd00387">
    <property type="entry name" value="Ribosomal_L7_L12"/>
    <property type="match status" value="1"/>
</dbReference>
<dbReference type="FunFam" id="1.20.5.710:FF:000003">
    <property type="entry name" value="50S ribosomal protein L7/L12"/>
    <property type="match status" value="1"/>
</dbReference>
<dbReference type="FunFam" id="3.30.1390.10:FF:000001">
    <property type="entry name" value="50S ribosomal protein L7/L12"/>
    <property type="match status" value="1"/>
</dbReference>
<dbReference type="Gene3D" id="3.30.1390.10">
    <property type="match status" value="1"/>
</dbReference>
<dbReference type="Gene3D" id="1.20.5.710">
    <property type="entry name" value="Single helix bin"/>
    <property type="match status" value="1"/>
</dbReference>
<dbReference type="HAMAP" id="MF_00368">
    <property type="entry name" value="Ribosomal_bL12"/>
    <property type="match status" value="1"/>
</dbReference>
<dbReference type="InterPro" id="IPR000206">
    <property type="entry name" value="Ribosomal_bL12"/>
</dbReference>
<dbReference type="InterPro" id="IPR013823">
    <property type="entry name" value="Ribosomal_bL12_C"/>
</dbReference>
<dbReference type="InterPro" id="IPR014719">
    <property type="entry name" value="Ribosomal_bL12_C/ClpS-like"/>
</dbReference>
<dbReference type="InterPro" id="IPR008932">
    <property type="entry name" value="Ribosomal_bL12_oligo"/>
</dbReference>
<dbReference type="InterPro" id="IPR036235">
    <property type="entry name" value="Ribosomal_bL12_oligo_N_sf"/>
</dbReference>
<dbReference type="NCBIfam" id="TIGR00855">
    <property type="entry name" value="L12"/>
    <property type="match status" value="1"/>
</dbReference>
<dbReference type="PANTHER" id="PTHR45987">
    <property type="entry name" value="39S RIBOSOMAL PROTEIN L12"/>
    <property type="match status" value="1"/>
</dbReference>
<dbReference type="PANTHER" id="PTHR45987:SF4">
    <property type="entry name" value="LARGE RIBOSOMAL SUBUNIT PROTEIN BL12M"/>
    <property type="match status" value="1"/>
</dbReference>
<dbReference type="Pfam" id="PF00542">
    <property type="entry name" value="Ribosomal_L12"/>
    <property type="match status" value="1"/>
</dbReference>
<dbReference type="Pfam" id="PF16320">
    <property type="entry name" value="Ribosomal_L12_N"/>
    <property type="match status" value="1"/>
</dbReference>
<dbReference type="SUPFAM" id="SSF54736">
    <property type="entry name" value="ClpS-like"/>
    <property type="match status" value="1"/>
</dbReference>
<dbReference type="SUPFAM" id="SSF48300">
    <property type="entry name" value="Ribosomal protein L7/12, oligomerisation (N-terminal) domain"/>
    <property type="match status" value="1"/>
</dbReference>
<sequence length="122" mass="12567">MAITKEDILEAVGSLTVMELNDLVKAFEEKFGVSAAAVAVASSAGPAAAAEEKTEFDVVLASAGDQKVGVIKVVRAITGLGLKEAKDIVDGAPKTIKEGVSKAEAEDIQKQLEEAGAKVEIK</sequence>